<sequence length="542" mass="57367">MAKDIKFSEDARRAMLRGVDQLANAVKVTLGPKGRNVVLEKKFGSPLITNDGVTIAKEIELEDPFENMGAKLVSEVASKTNDVAGDGTTTATVLAQAMIQEGLKNVTAGANPVGVRRGIEKAVATAIEELKAISKPIESKESIAQVAAISSGDEEVGKLIAEAMERVGNDGVITIEESKGFATELDVVEGMQFDRGYTSPYMVTDSDKMEAVLEKPYILITDKKINNIQEILPVLEQVVQQGRPMLIIAEDVEGEAQATLVLNKLRGTFNVVAVKAPGFGDRRKAMLEDIAILTGGQVITEDLGLELKTATVDQLGTANKVVVTKDDTTIVEGAGDSTQISARVNQIRAQMEETTSEFDREKLQERLAKLAGGVAVVKVGAATETELKERKLRIEDALNSTRAAVEEGIVAGGGTALVSIYNKVAALEAEGDVETGINIVLRSLEEPVRQIAHNAGLEGSVIVERLKHEAVGVGFNAANGEWVNMIDAGIVDPTKVTRSALQNASSVAALLLTTEAVVADKPDENGPAAVPDMGMGGMGGMM</sequence>
<name>CH60_LISMC</name>
<proteinExistence type="inferred from homology"/>
<organism>
    <name type="scientific">Listeria monocytogenes serotype 4b (strain CLIP80459)</name>
    <dbReference type="NCBI Taxonomy" id="568819"/>
    <lineage>
        <taxon>Bacteria</taxon>
        <taxon>Bacillati</taxon>
        <taxon>Bacillota</taxon>
        <taxon>Bacilli</taxon>
        <taxon>Bacillales</taxon>
        <taxon>Listeriaceae</taxon>
        <taxon>Listeria</taxon>
    </lineage>
</organism>
<protein>
    <recommendedName>
        <fullName evidence="1">Chaperonin GroEL</fullName>
        <ecNumber evidence="1">5.6.1.7</ecNumber>
    </recommendedName>
    <alternativeName>
        <fullName evidence="1">60 kDa chaperonin</fullName>
    </alternativeName>
    <alternativeName>
        <fullName evidence="1">Chaperonin-60</fullName>
        <shortName evidence="1">Cpn60</shortName>
    </alternativeName>
</protein>
<accession>C1KX21</accession>
<keyword id="KW-0067">ATP-binding</keyword>
<keyword id="KW-0143">Chaperone</keyword>
<keyword id="KW-0963">Cytoplasm</keyword>
<keyword id="KW-0413">Isomerase</keyword>
<keyword id="KW-0547">Nucleotide-binding</keyword>
<feature type="chain" id="PRO_1000212204" description="Chaperonin GroEL">
    <location>
        <begin position="1"/>
        <end position="542"/>
    </location>
</feature>
<feature type="region of interest" description="Disordered" evidence="2">
    <location>
        <begin position="522"/>
        <end position="542"/>
    </location>
</feature>
<feature type="binding site" evidence="1">
    <location>
        <begin position="29"/>
        <end position="32"/>
    </location>
    <ligand>
        <name>ATP</name>
        <dbReference type="ChEBI" id="CHEBI:30616"/>
    </ligand>
</feature>
<feature type="binding site" evidence="1">
    <location>
        <begin position="86"/>
        <end position="90"/>
    </location>
    <ligand>
        <name>ATP</name>
        <dbReference type="ChEBI" id="CHEBI:30616"/>
    </ligand>
</feature>
<feature type="binding site" evidence="1">
    <location>
        <position position="413"/>
    </location>
    <ligand>
        <name>ATP</name>
        <dbReference type="ChEBI" id="CHEBI:30616"/>
    </ligand>
</feature>
<feature type="binding site" evidence="1">
    <location>
        <begin position="476"/>
        <end position="478"/>
    </location>
    <ligand>
        <name>ATP</name>
        <dbReference type="ChEBI" id="CHEBI:30616"/>
    </ligand>
</feature>
<feature type="binding site" evidence="1">
    <location>
        <position position="492"/>
    </location>
    <ligand>
        <name>ATP</name>
        <dbReference type="ChEBI" id="CHEBI:30616"/>
    </ligand>
</feature>
<evidence type="ECO:0000255" key="1">
    <source>
        <dbReference type="HAMAP-Rule" id="MF_00600"/>
    </source>
</evidence>
<evidence type="ECO:0000256" key="2">
    <source>
        <dbReference type="SAM" id="MobiDB-lite"/>
    </source>
</evidence>
<gene>
    <name evidence="1" type="primary">groEL</name>
    <name evidence="1" type="synonym">groL</name>
    <name type="ordered locus">Lm4b_02089</name>
</gene>
<reference key="1">
    <citation type="journal article" date="2012" name="BMC Genomics">
        <title>Comparative genomics and transcriptomics of lineages I, II, and III strains of Listeria monocytogenes.</title>
        <authorList>
            <person name="Hain T."/>
            <person name="Ghai R."/>
            <person name="Billion A."/>
            <person name="Kuenne C.T."/>
            <person name="Steinweg C."/>
            <person name="Izar B."/>
            <person name="Mohamed W."/>
            <person name="Mraheil M."/>
            <person name="Domann E."/>
            <person name="Schaffrath S."/>
            <person name="Karst U."/>
            <person name="Goesmann A."/>
            <person name="Oehm S."/>
            <person name="Puhler A."/>
            <person name="Merkl R."/>
            <person name="Vorwerk S."/>
            <person name="Glaser P."/>
            <person name="Garrido P."/>
            <person name="Rusniok C."/>
            <person name="Buchrieser C."/>
            <person name="Goebel W."/>
            <person name="Chakraborty T."/>
        </authorList>
    </citation>
    <scope>NUCLEOTIDE SEQUENCE [LARGE SCALE GENOMIC DNA]</scope>
    <source>
        <strain>CLIP80459</strain>
    </source>
</reference>
<comment type="function">
    <text evidence="1">Together with its co-chaperonin GroES, plays an essential role in assisting protein folding. The GroEL-GroES system forms a nano-cage that allows encapsulation of the non-native substrate proteins and provides a physical environment optimized to promote and accelerate protein folding.</text>
</comment>
<comment type="catalytic activity">
    <reaction evidence="1">
        <text>ATP + H2O + a folded polypeptide = ADP + phosphate + an unfolded polypeptide.</text>
        <dbReference type="EC" id="5.6.1.7"/>
    </reaction>
</comment>
<comment type="subunit">
    <text evidence="1">Forms a cylinder of 14 subunits composed of two heptameric rings stacked back-to-back. Interacts with the co-chaperonin GroES.</text>
</comment>
<comment type="subcellular location">
    <subcellularLocation>
        <location evidence="1">Cytoplasm</location>
    </subcellularLocation>
</comment>
<comment type="similarity">
    <text evidence="1">Belongs to the chaperonin (HSP60) family.</text>
</comment>
<dbReference type="EC" id="5.6.1.7" evidence="1"/>
<dbReference type="EMBL" id="FM242711">
    <property type="protein sequence ID" value="CAS05848.1"/>
    <property type="molecule type" value="Genomic_DNA"/>
</dbReference>
<dbReference type="RefSeq" id="WP_003726503.1">
    <property type="nucleotide sequence ID" value="NC_012488.1"/>
</dbReference>
<dbReference type="SMR" id="C1KX21"/>
<dbReference type="KEGG" id="lmc:Lm4b_02089"/>
<dbReference type="HOGENOM" id="CLU_016503_3_0_9"/>
<dbReference type="GO" id="GO:0005737">
    <property type="term" value="C:cytoplasm"/>
    <property type="evidence" value="ECO:0007669"/>
    <property type="project" value="UniProtKB-SubCell"/>
</dbReference>
<dbReference type="GO" id="GO:0005524">
    <property type="term" value="F:ATP binding"/>
    <property type="evidence" value="ECO:0007669"/>
    <property type="project" value="UniProtKB-UniRule"/>
</dbReference>
<dbReference type="GO" id="GO:0140662">
    <property type="term" value="F:ATP-dependent protein folding chaperone"/>
    <property type="evidence" value="ECO:0007669"/>
    <property type="project" value="InterPro"/>
</dbReference>
<dbReference type="GO" id="GO:0016853">
    <property type="term" value="F:isomerase activity"/>
    <property type="evidence" value="ECO:0007669"/>
    <property type="project" value="UniProtKB-KW"/>
</dbReference>
<dbReference type="GO" id="GO:0051082">
    <property type="term" value="F:unfolded protein binding"/>
    <property type="evidence" value="ECO:0007669"/>
    <property type="project" value="UniProtKB-UniRule"/>
</dbReference>
<dbReference type="GO" id="GO:0042026">
    <property type="term" value="P:protein refolding"/>
    <property type="evidence" value="ECO:0007669"/>
    <property type="project" value="UniProtKB-UniRule"/>
</dbReference>
<dbReference type="CDD" id="cd03344">
    <property type="entry name" value="GroEL"/>
    <property type="match status" value="1"/>
</dbReference>
<dbReference type="FunFam" id="1.10.560.10:FF:000001">
    <property type="entry name" value="60 kDa chaperonin"/>
    <property type="match status" value="1"/>
</dbReference>
<dbReference type="FunFam" id="3.50.7.10:FF:000001">
    <property type="entry name" value="60 kDa chaperonin"/>
    <property type="match status" value="1"/>
</dbReference>
<dbReference type="Gene3D" id="3.50.7.10">
    <property type="entry name" value="GroEL"/>
    <property type="match status" value="1"/>
</dbReference>
<dbReference type="Gene3D" id="1.10.560.10">
    <property type="entry name" value="GroEL-like equatorial domain"/>
    <property type="match status" value="1"/>
</dbReference>
<dbReference type="Gene3D" id="3.30.260.10">
    <property type="entry name" value="TCP-1-like chaperonin intermediate domain"/>
    <property type="match status" value="1"/>
</dbReference>
<dbReference type="HAMAP" id="MF_00600">
    <property type="entry name" value="CH60"/>
    <property type="match status" value="1"/>
</dbReference>
<dbReference type="InterPro" id="IPR018370">
    <property type="entry name" value="Chaperonin_Cpn60_CS"/>
</dbReference>
<dbReference type="InterPro" id="IPR001844">
    <property type="entry name" value="Cpn60/GroEL"/>
</dbReference>
<dbReference type="InterPro" id="IPR002423">
    <property type="entry name" value="Cpn60/GroEL/TCP-1"/>
</dbReference>
<dbReference type="InterPro" id="IPR027409">
    <property type="entry name" value="GroEL-like_apical_dom_sf"/>
</dbReference>
<dbReference type="InterPro" id="IPR027413">
    <property type="entry name" value="GROEL-like_equatorial_sf"/>
</dbReference>
<dbReference type="InterPro" id="IPR027410">
    <property type="entry name" value="TCP-1-like_intermed_sf"/>
</dbReference>
<dbReference type="NCBIfam" id="TIGR02348">
    <property type="entry name" value="GroEL"/>
    <property type="match status" value="1"/>
</dbReference>
<dbReference type="NCBIfam" id="NF000592">
    <property type="entry name" value="PRK00013.1"/>
    <property type="match status" value="1"/>
</dbReference>
<dbReference type="NCBIfam" id="NF009487">
    <property type="entry name" value="PRK12849.1"/>
    <property type="match status" value="1"/>
</dbReference>
<dbReference type="NCBIfam" id="NF009488">
    <property type="entry name" value="PRK12850.1"/>
    <property type="match status" value="1"/>
</dbReference>
<dbReference type="NCBIfam" id="NF009489">
    <property type="entry name" value="PRK12851.1"/>
    <property type="match status" value="1"/>
</dbReference>
<dbReference type="PANTHER" id="PTHR45633">
    <property type="entry name" value="60 KDA HEAT SHOCK PROTEIN, MITOCHONDRIAL"/>
    <property type="match status" value="1"/>
</dbReference>
<dbReference type="Pfam" id="PF00118">
    <property type="entry name" value="Cpn60_TCP1"/>
    <property type="match status" value="1"/>
</dbReference>
<dbReference type="PRINTS" id="PR00298">
    <property type="entry name" value="CHAPERONIN60"/>
</dbReference>
<dbReference type="SUPFAM" id="SSF52029">
    <property type="entry name" value="GroEL apical domain-like"/>
    <property type="match status" value="1"/>
</dbReference>
<dbReference type="SUPFAM" id="SSF48592">
    <property type="entry name" value="GroEL equatorial domain-like"/>
    <property type="match status" value="1"/>
</dbReference>
<dbReference type="SUPFAM" id="SSF54849">
    <property type="entry name" value="GroEL-intermediate domain like"/>
    <property type="match status" value="1"/>
</dbReference>
<dbReference type="PROSITE" id="PS00296">
    <property type="entry name" value="CHAPERONINS_CPN60"/>
    <property type="match status" value="1"/>
</dbReference>